<proteinExistence type="inferred from homology"/>
<reference key="1">
    <citation type="submission" date="2007-02" db="EMBL/GenBank/DDBJ databases">
        <title>Complete sequence of chromosome of Yersinia pestis Pestoides F.</title>
        <authorList>
            <consortium name="US DOE Joint Genome Institute"/>
            <person name="Copeland A."/>
            <person name="Lucas S."/>
            <person name="Lapidus A."/>
            <person name="Barry K."/>
            <person name="Detter J.C."/>
            <person name="Glavina del Rio T."/>
            <person name="Hammon N."/>
            <person name="Israni S."/>
            <person name="Dalin E."/>
            <person name="Tice H."/>
            <person name="Pitluck S."/>
            <person name="Di Bartolo G."/>
            <person name="Chain P."/>
            <person name="Malfatti S."/>
            <person name="Shin M."/>
            <person name="Vergez L."/>
            <person name="Schmutz J."/>
            <person name="Larimer F."/>
            <person name="Land M."/>
            <person name="Hauser L."/>
            <person name="Worsham P."/>
            <person name="Chu M."/>
            <person name="Bearden S."/>
            <person name="Garcia E."/>
            <person name="Richardson P."/>
        </authorList>
    </citation>
    <scope>NUCLEOTIDE SEQUENCE [LARGE SCALE GENOMIC DNA]</scope>
    <source>
        <strain>Pestoides F</strain>
    </source>
</reference>
<gene>
    <name evidence="1" type="primary">napA</name>
    <name type="ordered locus">YPDSF_2143</name>
</gene>
<sequence>MKLSRRDFMKANAAVAAAAAAGMTIPTVAKAVGETTNAIKWDKAPCRFCGTGCGVLVGTQNGRIVASQGDPDSPVNRGLNCIKGYFLPKIMYGKDRLTQPLLRMKDGQYDKEGDFTPISWEKAFDIMELKFKNALKEKGPTAVGMFGSGQWTVWEGYAALKLLKGGFRSNNLDPNARHCMASSVVGFMRTFGMDEPMGCYDDIEEADAFVLWGSNMAEMHPVLWSRMTSRRLTNAHVRIAVLSTYEHRSFELADNPIVFTPQTDLVIMNYIANYIIQNNAVDKDFLAQHVNFRRGATDIGYGLRPTHPLEKAAKNPGSDASEPMSFEDFKTFVAEYTLEKTAKMSGVPEDQLESLAQLYADPKVKLVSYWTMGFNQHTRGVWANNMCYNLHLLTGKISTPGSGPFSLTGQPSACGTAREVGTFSHRLPADMVVTNEKHRQIAETTWQLPAGTIPEKVGLHAVAQDRALKDGTLNAYWVMCNNNMQAGPNINEERMPGWRDPRNFIVVSDPYPTISALSADLILPTSMWVEKEGAYGNAERRTQFWRQQVPSPGEAKSDLWQIVEFAKRFNVEEVWPAELVNQKPEYRGKNLYEVLFANDVVSKYPLSEIPDDQLNDEARDFGFYIQKGLFEEYASFGRGHAHDLAPFDVYHQVRGLRWPVVDGKETLWRYREGFDPFVPKGEEVRFYGKPDGKAVIFALPYEPAAESPDQEYDLWLSTGRVLEHWHTGSMTRRVPELHRAFPEAVLFIHPLDAKARGLHRGDKVKVISRRGEVISLVETRGRNRPPRGLVYMPFFDAAQLVNNLTLDATDPLSKETDFKKCAVKLERVVA</sequence>
<protein>
    <recommendedName>
        <fullName evidence="1">Periplasmic nitrate reductase</fullName>
        <ecNumber evidence="1">1.9.6.1</ecNumber>
    </recommendedName>
</protein>
<keyword id="KW-0004">4Fe-4S</keyword>
<keyword id="KW-0249">Electron transport</keyword>
<keyword id="KW-0408">Iron</keyword>
<keyword id="KW-0411">Iron-sulfur</keyword>
<keyword id="KW-0479">Metal-binding</keyword>
<keyword id="KW-0500">Molybdenum</keyword>
<keyword id="KW-0534">Nitrate assimilation</keyword>
<keyword id="KW-0560">Oxidoreductase</keyword>
<keyword id="KW-0574">Periplasm</keyword>
<keyword id="KW-0732">Signal</keyword>
<keyword id="KW-0813">Transport</keyword>
<evidence type="ECO:0000255" key="1">
    <source>
        <dbReference type="HAMAP-Rule" id="MF_01630"/>
    </source>
</evidence>
<accession>A4TMK8</accession>
<dbReference type="EC" id="1.9.6.1" evidence="1"/>
<dbReference type="EMBL" id="CP000668">
    <property type="protein sequence ID" value="ABP40520.1"/>
    <property type="molecule type" value="Genomic_DNA"/>
</dbReference>
<dbReference type="RefSeq" id="WP_011171900.1">
    <property type="nucleotide sequence ID" value="NZ_CP009715.1"/>
</dbReference>
<dbReference type="SMR" id="A4TMK8"/>
<dbReference type="GeneID" id="49785228"/>
<dbReference type="KEGG" id="ypp:YPDSF_2143"/>
<dbReference type="PATRIC" id="fig|386656.14.peg.3622"/>
<dbReference type="GO" id="GO:0016020">
    <property type="term" value="C:membrane"/>
    <property type="evidence" value="ECO:0007669"/>
    <property type="project" value="TreeGrafter"/>
</dbReference>
<dbReference type="GO" id="GO:0009325">
    <property type="term" value="C:nitrate reductase complex"/>
    <property type="evidence" value="ECO:0007669"/>
    <property type="project" value="TreeGrafter"/>
</dbReference>
<dbReference type="GO" id="GO:0042597">
    <property type="term" value="C:periplasmic space"/>
    <property type="evidence" value="ECO:0007669"/>
    <property type="project" value="UniProtKB-SubCell"/>
</dbReference>
<dbReference type="GO" id="GO:0051539">
    <property type="term" value="F:4 iron, 4 sulfur cluster binding"/>
    <property type="evidence" value="ECO:0007669"/>
    <property type="project" value="UniProtKB-KW"/>
</dbReference>
<dbReference type="GO" id="GO:0009055">
    <property type="term" value="F:electron transfer activity"/>
    <property type="evidence" value="ECO:0007669"/>
    <property type="project" value="UniProtKB-UniRule"/>
</dbReference>
<dbReference type="GO" id="GO:0005506">
    <property type="term" value="F:iron ion binding"/>
    <property type="evidence" value="ECO:0007669"/>
    <property type="project" value="UniProtKB-UniRule"/>
</dbReference>
<dbReference type="GO" id="GO:0030151">
    <property type="term" value="F:molybdenum ion binding"/>
    <property type="evidence" value="ECO:0007669"/>
    <property type="project" value="InterPro"/>
</dbReference>
<dbReference type="GO" id="GO:0043546">
    <property type="term" value="F:molybdopterin cofactor binding"/>
    <property type="evidence" value="ECO:0007669"/>
    <property type="project" value="InterPro"/>
</dbReference>
<dbReference type="GO" id="GO:0050140">
    <property type="term" value="F:nitrate reductase (cytochrome) activity"/>
    <property type="evidence" value="ECO:0007669"/>
    <property type="project" value="UniProtKB-EC"/>
</dbReference>
<dbReference type="GO" id="GO:0045333">
    <property type="term" value="P:cellular respiration"/>
    <property type="evidence" value="ECO:0007669"/>
    <property type="project" value="UniProtKB-ARBA"/>
</dbReference>
<dbReference type="GO" id="GO:0006777">
    <property type="term" value="P:Mo-molybdopterin cofactor biosynthetic process"/>
    <property type="evidence" value="ECO:0007669"/>
    <property type="project" value="UniProtKB-UniRule"/>
</dbReference>
<dbReference type="GO" id="GO:0042128">
    <property type="term" value="P:nitrate assimilation"/>
    <property type="evidence" value="ECO:0007669"/>
    <property type="project" value="UniProtKB-UniRule"/>
</dbReference>
<dbReference type="CDD" id="cd02791">
    <property type="entry name" value="MopB_CT_Nitrate-R-NapA-like"/>
    <property type="match status" value="1"/>
</dbReference>
<dbReference type="CDD" id="cd02754">
    <property type="entry name" value="MopB_Nitrate-R-NapA-like"/>
    <property type="match status" value="1"/>
</dbReference>
<dbReference type="FunFam" id="2.40.40.20:FF:000005">
    <property type="entry name" value="Periplasmic nitrate reductase"/>
    <property type="match status" value="1"/>
</dbReference>
<dbReference type="Gene3D" id="2.40.40.20">
    <property type="match status" value="1"/>
</dbReference>
<dbReference type="Gene3D" id="3.30.200.210">
    <property type="match status" value="1"/>
</dbReference>
<dbReference type="Gene3D" id="3.40.50.740">
    <property type="match status" value="1"/>
</dbReference>
<dbReference type="Gene3D" id="3.40.228.10">
    <property type="entry name" value="Dimethylsulfoxide Reductase, domain 2"/>
    <property type="match status" value="1"/>
</dbReference>
<dbReference type="HAMAP" id="MF_01630">
    <property type="entry name" value="Nitrate_reduct_NapA"/>
    <property type="match status" value="1"/>
</dbReference>
<dbReference type="InterPro" id="IPR009010">
    <property type="entry name" value="Asp_de-COase-like_dom_sf"/>
</dbReference>
<dbReference type="InterPro" id="IPR041957">
    <property type="entry name" value="CT_Nitrate-R-NapA-like"/>
</dbReference>
<dbReference type="InterPro" id="IPR006657">
    <property type="entry name" value="MoPterin_dinucl-bd_dom"/>
</dbReference>
<dbReference type="InterPro" id="IPR006656">
    <property type="entry name" value="Mopterin_OxRdtase"/>
</dbReference>
<dbReference type="InterPro" id="IPR006963">
    <property type="entry name" value="Mopterin_OxRdtase_4Fe-4S_dom"/>
</dbReference>
<dbReference type="InterPro" id="IPR027467">
    <property type="entry name" value="MopterinOxRdtase_cofactor_BS"/>
</dbReference>
<dbReference type="InterPro" id="IPR010051">
    <property type="entry name" value="Periplasm_NO3_reductase_lsu"/>
</dbReference>
<dbReference type="InterPro" id="IPR050123">
    <property type="entry name" value="Prok_molybdopt-oxidoreductase"/>
</dbReference>
<dbReference type="InterPro" id="IPR006311">
    <property type="entry name" value="TAT_signal"/>
</dbReference>
<dbReference type="InterPro" id="IPR019546">
    <property type="entry name" value="TAT_signal_bac_arc"/>
</dbReference>
<dbReference type="NCBIfam" id="TIGR01706">
    <property type="entry name" value="NAPA"/>
    <property type="match status" value="1"/>
</dbReference>
<dbReference type="NCBIfam" id="NF010055">
    <property type="entry name" value="PRK13532.1"/>
    <property type="match status" value="1"/>
</dbReference>
<dbReference type="NCBIfam" id="TIGR01409">
    <property type="entry name" value="TAT_signal_seq"/>
    <property type="match status" value="1"/>
</dbReference>
<dbReference type="PANTHER" id="PTHR43105:SF11">
    <property type="entry name" value="PERIPLASMIC NITRATE REDUCTASE"/>
    <property type="match status" value="1"/>
</dbReference>
<dbReference type="PANTHER" id="PTHR43105">
    <property type="entry name" value="RESPIRATORY NITRATE REDUCTASE"/>
    <property type="match status" value="1"/>
</dbReference>
<dbReference type="Pfam" id="PF04879">
    <property type="entry name" value="Molybdop_Fe4S4"/>
    <property type="match status" value="1"/>
</dbReference>
<dbReference type="Pfam" id="PF00384">
    <property type="entry name" value="Molybdopterin"/>
    <property type="match status" value="1"/>
</dbReference>
<dbReference type="Pfam" id="PF01568">
    <property type="entry name" value="Molydop_binding"/>
    <property type="match status" value="1"/>
</dbReference>
<dbReference type="Pfam" id="PF10518">
    <property type="entry name" value="TAT_signal"/>
    <property type="match status" value="1"/>
</dbReference>
<dbReference type="SMART" id="SM00926">
    <property type="entry name" value="Molybdop_Fe4S4"/>
    <property type="match status" value="1"/>
</dbReference>
<dbReference type="SUPFAM" id="SSF50692">
    <property type="entry name" value="ADC-like"/>
    <property type="match status" value="1"/>
</dbReference>
<dbReference type="SUPFAM" id="SSF53706">
    <property type="entry name" value="Formate dehydrogenase/DMSO reductase, domains 1-3"/>
    <property type="match status" value="1"/>
</dbReference>
<dbReference type="PROSITE" id="PS51669">
    <property type="entry name" value="4FE4S_MOW_BIS_MGD"/>
    <property type="match status" value="1"/>
</dbReference>
<dbReference type="PROSITE" id="PS00551">
    <property type="entry name" value="MOLYBDOPTERIN_PROK_1"/>
    <property type="match status" value="1"/>
</dbReference>
<dbReference type="PROSITE" id="PS51318">
    <property type="entry name" value="TAT"/>
    <property type="match status" value="1"/>
</dbReference>
<organism>
    <name type="scientific">Yersinia pestis (strain Pestoides F)</name>
    <dbReference type="NCBI Taxonomy" id="386656"/>
    <lineage>
        <taxon>Bacteria</taxon>
        <taxon>Pseudomonadati</taxon>
        <taxon>Pseudomonadota</taxon>
        <taxon>Gammaproteobacteria</taxon>
        <taxon>Enterobacterales</taxon>
        <taxon>Yersiniaceae</taxon>
        <taxon>Yersinia</taxon>
    </lineage>
</organism>
<comment type="function">
    <text evidence="1">Catalytic subunit of the periplasmic nitrate reductase complex NapAB. Receives electrons from NapB and catalyzes the reduction of nitrate to nitrite.</text>
</comment>
<comment type="catalytic activity">
    <reaction evidence="1">
        <text>2 Fe(II)-[cytochrome] + nitrate + 2 H(+) = 2 Fe(III)-[cytochrome] + nitrite + H2O</text>
        <dbReference type="Rhea" id="RHEA:12909"/>
        <dbReference type="Rhea" id="RHEA-COMP:11777"/>
        <dbReference type="Rhea" id="RHEA-COMP:11778"/>
        <dbReference type="ChEBI" id="CHEBI:15377"/>
        <dbReference type="ChEBI" id="CHEBI:15378"/>
        <dbReference type="ChEBI" id="CHEBI:16301"/>
        <dbReference type="ChEBI" id="CHEBI:17632"/>
        <dbReference type="ChEBI" id="CHEBI:29033"/>
        <dbReference type="ChEBI" id="CHEBI:29034"/>
        <dbReference type="EC" id="1.9.6.1"/>
    </reaction>
</comment>
<comment type="cofactor">
    <cofactor evidence="1">
        <name>[4Fe-4S] cluster</name>
        <dbReference type="ChEBI" id="CHEBI:49883"/>
    </cofactor>
    <text evidence="1">Binds 1 [4Fe-4S] cluster.</text>
</comment>
<comment type="cofactor">
    <cofactor evidence="1">
        <name>Mo-bis(molybdopterin guanine dinucleotide)</name>
        <dbReference type="ChEBI" id="CHEBI:60539"/>
    </cofactor>
    <text evidence="1">Binds 1 molybdenum-bis(molybdopterin guanine dinucleotide) (Mo-bis-MGD) cofactor per subunit.</text>
</comment>
<comment type="subunit">
    <text evidence="1">Component of the periplasmic nitrate reductase NapAB complex composed of NapA and NapB.</text>
</comment>
<comment type="subcellular location">
    <subcellularLocation>
        <location evidence="1">Periplasm</location>
    </subcellularLocation>
</comment>
<comment type="PTM">
    <text evidence="1">Predicted to be exported by the Tat system. The position of the signal peptide cleavage has not been experimentally proven.</text>
</comment>
<comment type="similarity">
    <text evidence="1">Belongs to the prokaryotic molybdopterin-containing oxidoreductase family. NasA/NapA/NarB subfamily.</text>
</comment>
<feature type="signal peptide" description="Tat-type signal" evidence="1">
    <location>
        <begin position="1"/>
        <end position="31"/>
    </location>
</feature>
<feature type="chain" id="PRO_5000236854" description="Periplasmic nitrate reductase" evidence="1">
    <location>
        <begin position="32"/>
        <end position="830"/>
    </location>
</feature>
<feature type="domain" description="4Fe-4S Mo/W bis-MGD-type" evidence="1">
    <location>
        <begin position="39"/>
        <end position="95"/>
    </location>
</feature>
<feature type="binding site" evidence="1">
    <location>
        <position position="46"/>
    </location>
    <ligand>
        <name>[4Fe-4S] cluster</name>
        <dbReference type="ChEBI" id="CHEBI:49883"/>
    </ligand>
</feature>
<feature type="binding site" evidence="1">
    <location>
        <position position="49"/>
    </location>
    <ligand>
        <name>[4Fe-4S] cluster</name>
        <dbReference type="ChEBI" id="CHEBI:49883"/>
    </ligand>
</feature>
<feature type="binding site" evidence="1">
    <location>
        <position position="53"/>
    </location>
    <ligand>
        <name>[4Fe-4S] cluster</name>
        <dbReference type="ChEBI" id="CHEBI:49883"/>
    </ligand>
</feature>
<feature type="binding site" evidence="1">
    <location>
        <position position="81"/>
    </location>
    <ligand>
        <name>[4Fe-4S] cluster</name>
        <dbReference type="ChEBI" id="CHEBI:49883"/>
    </ligand>
</feature>
<feature type="binding site" evidence="1">
    <location>
        <position position="83"/>
    </location>
    <ligand>
        <name>Mo-bis(molybdopterin guanine dinucleotide)</name>
        <dbReference type="ChEBI" id="CHEBI:60539"/>
    </ligand>
</feature>
<feature type="binding site" evidence="1">
    <location>
        <position position="150"/>
    </location>
    <ligand>
        <name>Mo-bis(molybdopterin guanine dinucleotide)</name>
        <dbReference type="ChEBI" id="CHEBI:60539"/>
    </ligand>
</feature>
<feature type="binding site" evidence="1">
    <location>
        <position position="175"/>
    </location>
    <ligand>
        <name>Mo-bis(molybdopterin guanine dinucleotide)</name>
        <dbReference type="ChEBI" id="CHEBI:60539"/>
    </ligand>
</feature>
<feature type="binding site" evidence="1">
    <location>
        <position position="179"/>
    </location>
    <ligand>
        <name>Mo-bis(molybdopterin guanine dinucleotide)</name>
        <dbReference type="ChEBI" id="CHEBI:60539"/>
    </ligand>
</feature>
<feature type="binding site" evidence="1">
    <location>
        <begin position="212"/>
        <end position="219"/>
    </location>
    <ligand>
        <name>Mo-bis(molybdopterin guanine dinucleotide)</name>
        <dbReference type="ChEBI" id="CHEBI:60539"/>
    </ligand>
</feature>
<feature type="binding site" evidence="1">
    <location>
        <begin position="243"/>
        <end position="247"/>
    </location>
    <ligand>
        <name>Mo-bis(molybdopterin guanine dinucleotide)</name>
        <dbReference type="ChEBI" id="CHEBI:60539"/>
    </ligand>
</feature>
<feature type="binding site" evidence="1">
    <location>
        <begin position="262"/>
        <end position="264"/>
    </location>
    <ligand>
        <name>Mo-bis(molybdopterin guanine dinucleotide)</name>
        <dbReference type="ChEBI" id="CHEBI:60539"/>
    </ligand>
</feature>
<feature type="binding site" evidence="1">
    <location>
        <position position="372"/>
    </location>
    <ligand>
        <name>Mo-bis(molybdopterin guanine dinucleotide)</name>
        <dbReference type="ChEBI" id="CHEBI:60539"/>
    </ligand>
</feature>
<feature type="binding site" evidence="1">
    <location>
        <position position="376"/>
    </location>
    <ligand>
        <name>Mo-bis(molybdopterin guanine dinucleotide)</name>
        <dbReference type="ChEBI" id="CHEBI:60539"/>
    </ligand>
</feature>
<feature type="binding site" evidence="1">
    <location>
        <position position="482"/>
    </location>
    <ligand>
        <name>Mo-bis(molybdopterin guanine dinucleotide)</name>
        <dbReference type="ChEBI" id="CHEBI:60539"/>
    </ligand>
</feature>
<feature type="binding site" evidence="1">
    <location>
        <begin position="508"/>
        <end position="509"/>
    </location>
    <ligand>
        <name>Mo-bis(molybdopterin guanine dinucleotide)</name>
        <dbReference type="ChEBI" id="CHEBI:60539"/>
    </ligand>
</feature>
<feature type="binding site" evidence="1">
    <location>
        <position position="531"/>
    </location>
    <ligand>
        <name>Mo-bis(molybdopterin guanine dinucleotide)</name>
        <dbReference type="ChEBI" id="CHEBI:60539"/>
    </ligand>
</feature>
<feature type="binding site" evidence="1">
    <location>
        <position position="558"/>
    </location>
    <ligand>
        <name>Mo-bis(molybdopterin guanine dinucleotide)</name>
        <dbReference type="ChEBI" id="CHEBI:60539"/>
    </ligand>
</feature>
<feature type="binding site" evidence="1">
    <location>
        <begin position="718"/>
        <end position="727"/>
    </location>
    <ligand>
        <name>Mo-bis(molybdopterin guanine dinucleotide)</name>
        <dbReference type="ChEBI" id="CHEBI:60539"/>
    </ligand>
</feature>
<feature type="binding site" evidence="1">
    <location>
        <position position="794"/>
    </location>
    <ligand>
        <name>substrate</name>
    </ligand>
</feature>
<feature type="binding site" evidence="1">
    <location>
        <position position="802"/>
    </location>
    <ligand>
        <name>Mo-bis(molybdopterin guanine dinucleotide)</name>
        <dbReference type="ChEBI" id="CHEBI:60539"/>
    </ligand>
</feature>
<feature type="binding site" evidence="1">
    <location>
        <position position="819"/>
    </location>
    <ligand>
        <name>Mo-bis(molybdopterin guanine dinucleotide)</name>
        <dbReference type="ChEBI" id="CHEBI:60539"/>
    </ligand>
</feature>
<name>NAPA_YERPP</name>